<comment type="function">
    <text evidence="1 6 8 9 10 11 12 13">A scaffold protein that connects plasma membrane proteins and regulatory components, regulating their surface expression in epithelial cells apical domains. May be involved in the coordination of a diverse range of regulatory processes for ion transport and second messenger cascades. In complex with NHERF1, may cluster proteins that are functionally dependent in a mutual fashion and modulate the trafficking and the activity of the associated membrane proteins. May play a role in the cellular mechanisms associated with multidrug resistance through its interaction with ABCC2 and PDZK1IP1. May potentiate the CFTR chloride channel activity (By similarity). Required for normal cell-surface expression of SCARB1. Plays a role in maintaining normal plasma cholesterol levels via its effects on SCARB1. Plays a role in the normal localization and function of the chloride-anion exchanger SLC26A6 to the plasma membrane in the brush border of the proximal tubule of the kidney. May be involved in the regulation of proximal tubular Na(+)-dependent inorganic phosphate cotransport therefore playing an important role in tubule function.</text>
</comment>
<comment type="subunit">
    <text evidence="2 6 7 9 10 12 13 14">Interacts with PDZK1IP1 and ABCC2. Binds to the C-terminal region of SLC26A3. Interacts (via C-terminal PDZ domain) with SLC26A6 (via C-terminal domain). Interacts (via C-terminal PDZ domain) with SLC9A3 (via C-terminal domain) (By similarity). Component of a complex, composed of PDZK1, SYNGAP1, KLHL17 and NMDA receptors. Interacts (via PDZ1 domain) directly with KLHL17; the interaction is important for integrity of actin cytoskeleton structures in neurons (By similarity). Forms a heterodimeric complex with NHERF1. Interacts with AKAP2, BCR, CFTR, SLCO1A1, SLC22A12, SLC22A4, SLC22A5, SLC26A6, NHERF2 and SLC17A1. Interacts (via the first PDZ domain) with PTGIR (via non-isoprenylated C-terminus). Interacts (via PDZ domains 1 and 3) with SCARB1 (C-terminal domain). Interacts (via PDZ domains 1 and 3) with SLC5A8 (via PDZ-binding motif); interaction increases nicotinate transport activity of SLC5A8 (By similarity).</text>
</comment>
<comment type="subcellular location">
    <subcellularLocation>
        <location>Membrane</location>
        <topology evidence="3">Peripheral membrane protein</topology>
    </subcellularLocation>
    <subcellularLocation>
        <location evidence="6 11">Cell membrane</location>
    </subcellularLocation>
    <text evidence="3 6 11">Localized in the brush border membrane of renal proximal tubule cells (PubMed:11051556, PubMed:16141316). Associated with peripheral membranes (By similarity). Localizes to the apical compartment of proximal cells and to sinusoidal liver membranes (By similarity).</text>
</comment>
<comment type="tissue specificity">
    <text evidence="6 8">Expressed in kidney, liver, small intestine. brain, lung, and testis (at protein level).</text>
</comment>
<comment type="domain">
    <text evidence="1">The PDZ 2 and 3 domains seem to be involved in the interaction with SLC26A3.</text>
</comment>
<comment type="domain">
    <text>Interaction with the C-terminus of CFTR could be mediated through independent binding of PDZ 1, 3 and 4 domains.</text>
</comment>
<comment type="domain">
    <text evidence="1">The PDZ 1 and 3 domains seem to be involved in the interaction with SLCO1A1.</text>
</comment>
<comment type="domain">
    <text evidence="1">The PDZ 1 domain interacts with BCR.</text>
</comment>
<comment type="domain">
    <text>The PDZ 2 and 4 domains do not interact with the C-terminal region of SCARB1.</text>
</comment>
<comment type="miscellaneous">
    <text>Disruption of the gene was not associated with abnormal growth and development or redistribution of interacting proteins. However, a modulation of expression of selective ion channels in the kidney, as well as increased serum cholesterol levels were observed.</text>
</comment>
<comment type="similarity">
    <text evidence="15">Belongs to the NHER family.</text>
</comment>
<comment type="sequence caution" evidence="15">
    <conflict type="frameshift">
        <sequence resource="EMBL-CDS" id="AAL84634"/>
    </conflict>
</comment>
<comment type="sequence caution" evidence="15">
    <conflict type="frameshift">
        <sequence resource="EMBL-CDS" id="BAC26605"/>
    </conflict>
    <text>The frameshift causes a read through of the stop codon.</text>
</comment>
<evidence type="ECO:0000250" key="1"/>
<evidence type="ECO:0000250" key="2">
    <source>
        <dbReference type="UniProtKB" id="Q5T2W1"/>
    </source>
</evidence>
<evidence type="ECO:0000250" key="3">
    <source>
        <dbReference type="UniProtKB" id="Q9JJ40"/>
    </source>
</evidence>
<evidence type="ECO:0000255" key="4">
    <source>
        <dbReference type="PROSITE-ProRule" id="PRU00143"/>
    </source>
</evidence>
<evidence type="ECO:0000256" key="5">
    <source>
        <dbReference type="SAM" id="MobiDB-lite"/>
    </source>
</evidence>
<evidence type="ECO:0000269" key="6">
    <source>
    </source>
</evidence>
<evidence type="ECO:0000269" key="7">
    <source>
    </source>
</evidence>
<evidence type="ECO:0000269" key="8">
    <source>
    </source>
</evidence>
<evidence type="ECO:0000269" key="9">
    <source>
    </source>
</evidence>
<evidence type="ECO:0000269" key="10">
    <source>
    </source>
</evidence>
<evidence type="ECO:0000269" key="11">
    <source>
    </source>
</evidence>
<evidence type="ECO:0000269" key="12">
    <source>
    </source>
</evidence>
<evidence type="ECO:0000269" key="13">
    <source>
    </source>
</evidence>
<evidence type="ECO:0000269" key="14">
    <source>
    </source>
</evidence>
<evidence type="ECO:0000305" key="15"/>
<evidence type="ECO:0007744" key="16">
    <source>
    </source>
</evidence>
<evidence type="ECO:0007744" key="17">
    <source>
    </source>
</evidence>
<evidence type="ECO:0007829" key="18">
    <source>
        <dbReference type="PDB" id="2EDZ"/>
    </source>
</evidence>
<evidence type="ECO:0007829" key="19">
    <source>
        <dbReference type="PDB" id="3NGH"/>
    </source>
</evidence>
<evidence type="ECO:0007829" key="20">
    <source>
        <dbReference type="PDB" id="3R68"/>
    </source>
</evidence>
<evidence type="ECO:0007829" key="21">
    <source>
        <dbReference type="PDB" id="3R69"/>
    </source>
</evidence>
<evidence type="ECO:0007829" key="22">
    <source>
        <dbReference type="PDB" id="4F8K"/>
    </source>
</evidence>
<evidence type="ECO:0007829" key="23">
    <source>
        <dbReference type="PDB" id="4R2Z"/>
    </source>
</evidence>
<proteinExistence type="evidence at protein level"/>
<keyword id="KW-0002">3D-structure</keyword>
<keyword id="KW-1003">Cell membrane</keyword>
<keyword id="KW-0903">Direct protein sequencing</keyword>
<keyword id="KW-0472">Membrane</keyword>
<keyword id="KW-0597">Phosphoprotein</keyword>
<keyword id="KW-1185">Reference proteome</keyword>
<keyword id="KW-0677">Repeat</keyword>
<gene>
    <name type="primary">Pdzk1</name>
    <name type="synonym">Cap70</name>
    <name type="synonym">Nherf3</name>
</gene>
<dbReference type="EMBL" id="AF474247">
    <property type="protein sequence ID" value="AAL84634.1"/>
    <property type="status" value="ALT_FRAME"/>
    <property type="molecule type" value="mRNA"/>
</dbReference>
<dbReference type="EMBL" id="AF220100">
    <property type="protein sequence ID" value="AAF73863.1"/>
    <property type="molecule type" value="mRNA"/>
</dbReference>
<dbReference type="EMBL" id="AK006269">
    <property type="protein sequence ID" value="BAB24493.1"/>
    <property type="molecule type" value="mRNA"/>
</dbReference>
<dbReference type="EMBL" id="AK029752">
    <property type="protein sequence ID" value="BAC26598.1"/>
    <property type="molecule type" value="mRNA"/>
</dbReference>
<dbReference type="EMBL" id="AK029764">
    <property type="protein sequence ID" value="BAC26605.1"/>
    <property type="status" value="ALT_FRAME"/>
    <property type="molecule type" value="mRNA"/>
</dbReference>
<dbReference type="EMBL" id="AK012070">
    <property type="protein sequence ID" value="BAB28007.1"/>
    <property type="molecule type" value="mRNA"/>
</dbReference>
<dbReference type="EMBL" id="AK014879">
    <property type="protein sequence ID" value="BAB29600.1"/>
    <property type="molecule type" value="mRNA"/>
</dbReference>
<dbReference type="EMBL" id="BC013512">
    <property type="protein sequence ID" value="AAH13512.1"/>
    <property type="molecule type" value="mRNA"/>
</dbReference>
<dbReference type="CCDS" id="CCDS17649.1"/>
<dbReference type="RefSeq" id="NP_001139473.1">
    <property type="nucleotide sequence ID" value="NM_001146001.1"/>
</dbReference>
<dbReference type="RefSeq" id="NP_067492.2">
    <property type="nucleotide sequence ID" value="NM_021517.2"/>
</dbReference>
<dbReference type="RefSeq" id="XP_006501896.1">
    <property type="nucleotide sequence ID" value="XM_006501833.2"/>
</dbReference>
<dbReference type="RefSeq" id="XP_011238480.1">
    <property type="nucleotide sequence ID" value="XM_011240178.2"/>
</dbReference>
<dbReference type="RefSeq" id="XP_017175164.1">
    <property type="nucleotide sequence ID" value="XM_017319675.1"/>
</dbReference>
<dbReference type="PDB" id="2D90">
    <property type="method" value="NMR"/>
    <property type="chains" value="A=242-330"/>
</dbReference>
<dbReference type="PDB" id="2EDZ">
    <property type="method" value="NMR"/>
    <property type="chains" value="A=1-107"/>
</dbReference>
<dbReference type="PDB" id="3NGH">
    <property type="method" value="X-ray"/>
    <property type="resolution" value="1.80 A"/>
    <property type="chains" value="A/B=7-106"/>
</dbReference>
<dbReference type="PDB" id="3R68">
    <property type="method" value="X-ray"/>
    <property type="resolution" value="1.30 A"/>
    <property type="chains" value="A=238-323"/>
</dbReference>
<dbReference type="PDB" id="3R69">
    <property type="method" value="X-ray"/>
    <property type="resolution" value="1.50 A"/>
    <property type="chains" value="A/B=241-322"/>
</dbReference>
<dbReference type="PDB" id="4F8K">
    <property type="method" value="X-ray"/>
    <property type="resolution" value="1.70 A"/>
    <property type="chains" value="A/B=7-106"/>
</dbReference>
<dbReference type="PDB" id="4R2Z">
    <property type="method" value="X-ray"/>
    <property type="resolution" value="1.70 A"/>
    <property type="chains" value="A/B=375-459"/>
</dbReference>
<dbReference type="PDBsum" id="2D90"/>
<dbReference type="PDBsum" id="2EDZ"/>
<dbReference type="PDBsum" id="3NGH"/>
<dbReference type="PDBsum" id="3R68"/>
<dbReference type="PDBsum" id="3R69"/>
<dbReference type="PDBsum" id="4F8K"/>
<dbReference type="PDBsum" id="4R2Z"/>
<dbReference type="SMR" id="Q9JIL4"/>
<dbReference type="BioGRID" id="208488">
    <property type="interactions" value="7"/>
</dbReference>
<dbReference type="CORUM" id="Q9JIL4"/>
<dbReference type="FunCoup" id="Q9JIL4">
    <property type="interactions" value="120"/>
</dbReference>
<dbReference type="IntAct" id="Q9JIL4">
    <property type="interactions" value="5"/>
</dbReference>
<dbReference type="MINT" id="Q9JIL4"/>
<dbReference type="STRING" id="10090.ENSMUSP00000102685"/>
<dbReference type="iPTMnet" id="Q9JIL4"/>
<dbReference type="PhosphoSitePlus" id="Q9JIL4"/>
<dbReference type="SwissPalm" id="Q9JIL4"/>
<dbReference type="jPOST" id="Q9JIL4"/>
<dbReference type="PaxDb" id="10090-ENSMUSP00000102685"/>
<dbReference type="PeptideAtlas" id="Q9JIL4"/>
<dbReference type="ProteomicsDB" id="252891"/>
<dbReference type="DNASU" id="59020"/>
<dbReference type="GeneID" id="59020"/>
<dbReference type="KEGG" id="mmu:59020"/>
<dbReference type="UCSC" id="uc008qoi.2">
    <property type="organism name" value="mouse"/>
</dbReference>
<dbReference type="AGR" id="MGI:1928901"/>
<dbReference type="CTD" id="5174"/>
<dbReference type="MGI" id="MGI:1928901">
    <property type="gene designation" value="Pdzk1"/>
</dbReference>
<dbReference type="eggNOG" id="KOG3528">
    <property type="taxonomic scope" value="Eukaryota"/>
</dbReference>
<dbReference type="InParanoid" id="Q9JIL4"/>
<dbReference type="OrthoDB" id="10009200at2759"/>
<dbReference type="PhylomeDB" id="Q9JIL4"/>
<dbReference type="TreeFam" id="TF350449"/>
<dbReference type="BioGRID-ORCS" id="59020">
    <property type="hits" value="4 hits in 77 CRISPR screens"/>
</dbReference>
<dbReference type="ChiTaRS" id="Pdzk1">
    <property type="organism name" value="mouse"/>
</dbReference>
<dbReference type="EvolutionaryTrace" id="Q9JIL4"/>
<dbReference type="PRO" id="PR:Q9JIL4"/>
<dbReference type="Proteomes" id="UP000000589">
    <property type="component" value="Unplaced"/>
</dbReference>
<dbReference type="RNAct" id="Q9JIL4">
    <property type="molecule type" value="protein"/>
</dbReference>
<dbReference type="GO" id="GO:0031526">
    <property type="term" value="C:brush border membrane"/>
    <property type="evidence" value="ECO:0000314"/>
    <property type="project" value="UniProtKB"/>
</dbReference>
<dbReference type="GO" id="GO:0005886">
    <property type="term" value="C:plasma membrane"/>
    <property type="evidence" value="ECO:0000314"/>
    <property type="project" value="UniProtKB"/>
</dbReference>
<dbReference type="GO" id="GO:0001701">
    <property type="term" value="P:in utero embryonic development"/>
    <property type="evidence" value="ECO:0000315"/>
    <property type="project" value="MGI"/>
</dbReference>
<dbReference type="GO" id="GO:0090314">
    <property type="term" value="P:positive regulation of protein targeting to membrane"/>
    <property type="evidence" value="ECO:0000315"/>
    <property type="project" value="UniProtKB"/>
</dbReference>
<dbReference type="GO" id="GO:0072659">
    <property type="term" value="P:protein localization to plasma membrane"/>
    <property type="evidence" value="ECO:0000315"/>
    <property type="project" value="UniProtKB"/>
</dbReference>
<dbReference type="GO" id="GO:0044070">
    <property type="term" value="P:regulation of monoatomic anion transport"/>
    <property type="evidence" value="ECO:0000315"/>
    <property type="project" value="UniProtKB"/>
</dbReference>
<dbReference type="CDD" id="cd06768">
    <property type="entry name" value="PDZ_NHERF-like"/>
    <property type="match status" value="4"/>
</dbReference>
<dbReference type="FunFam" id="2.30.42.10:FF:000187">
    <property type="entry name" value="Na(+)/H(+) exchange regulatory cofactor NHE-RF3"/>
    <property type="match status" value="1"/>
</dbReference>
<dbReference type="FunFam" id="2.30.42.10:FF:000123">
    <property type="entry name" value="Na(+)/H(+) exchange regulatory cofactor NHE-RF4"/>
    <property type="match status" value="1"/>
</dbReference>
<dbReference type="Gene3D" id="2.30.42.10">
    <property type="match status" value="4"/>
</dbReference>
<dbReference type="InterPro" id="IPR051067">
    <property type="entry name" value="NHER"/>
</dbReference>
<dbReference type="InterPro" id="IPR001478">
    <property type="entry name" value="PDZ"/>
</dbReference>
<dbReference type="InterPro" id="IPR036034">
    <property type="entry name" value="PDZ_sf"/>
</dbReference>
<dbReference type="PANTHER" id="PTHR14191:SF6">
    <property type="entry name" value="NA(+)_H(+) EXCHANGE REGULATORY COFACTOR NHE-RF3-RELATED"/>
    <property type="match status" value="1"/>
</dbReference>
<dbReference type="PANTHER" id="PTHR14191">
    <property type="entry name" value="PDZ DOMAIN CONTAINING PROTEIN"/>
    <property type="match status" value="1"/>
</dbReference>
<dbReference type="Pfam" id="PF00595">
    <property type="entry name" value="PDZ"/>
    <property type="match status" value="4"/>
</dbReference>
<dbReference type="SMART" id="SM00228">
    <property type="entry name" value="PDZ"/>
    <property type="match status" value="4"/>
</dbReference>
<dbReference type="SUPFAM" id="SSF50156">
    <property type="entry name" value="PDZ domain-like"/>
    <property type="match status" value="4"/>
</dbReference>
<dbReference type="PROSITE" id="PS50106">
    <property type="entry name" value="PDZ"/>
    <property type="match status" value="4"/>
</dbReference>
<organism>
    <name type="scientific">Mus musculus</name>
    <name type="common">Mouse</name>
    <dbReference type="NCBI Taxonomy" id="10090"/>
    <lineage>
        <taxon>Eukaryota</taxon>
        <taxon>Metazoa</taxon>
        <taxon>Chordata</taxon>
        <taxon>Craniata</taxon>
        <taxon>Vertebrata</taxon>
        <taxon>Euteleostomi</taxon>
        <taxon>Mammalia</taxon>
        <taxon>Eutheria</taxon>
        <taxon>Euarchontoglires</taxon>
        <taxon>Glires</taxon>
        <taxon>Rodentia</taxon>
        <taxon>Myomorpha</taxon>
        <taxon>Muroidea</taxon>
        <taxon>Muridae</taxon>
        <taxon>Murinae</taxon>
        <taxon>Mus</taxon>
        <taxon>Mus</taxon>
    </lineage>
</organism>
<sequence>MASTFNPRECKLSKQEGQNYGFFLRIEKDTDGHLIRVIEEGSPAEKAGLLDGDRVLRINGVFVDKEEHAQVVELVRKSGNSVTLLVLDGDSYEKAVKNQVDLKELDQSQREAALNDKKPGPGMNGAVEPCAQPRLCYLVKEGNSFGFSLKTIQGKKGVYLTDIMPQGVAMKAGVLADDHLIEVNGENVENASHEEVVEKVTKSGSRIMFLLVDKETARCHSEQKTQFKRETASLKLLPHQPRVVVIKKGSNGYGFYLRAGPEQKGQIIKDIEPGSPAEAAGLKNNDLVVAVNGKSVEALDHDGVVEMIRKGGDQTTLLVLDKEAESIYSLARFSPLLYCQSQELPNGSVKEGPAPIPAPLEATGSEPTEDAEGHKPKLCRLLKEDDSYGFHLNAIRGQPGSFVKEVQQGGPADKAGLENEDVIIEVNGENVQEEPYDRVVERIKSSGKHVTLLVCGKMAYSYFQAKKIPIVSSMAEPLVAGPDEKGETSAESEHDAHPAKDRTLSTASHSSSNSEDTEM</sequence>
<feature type="chain" id="PRO_0000058288" description="Na(+)/H(+) exchange regulatory cofactor NHE-RF3">
    <location>
        <begin position="1"/>
        <end position="519"/>
    </location>
</feature>
<feature type="domain" description="PDZ 1" evidence="4">
    <location>
        <begin position="9"/>
        <end position="90"/>
    </location>
</feature>
<feature type="domain" description="PDZ 2" evidence="4">
    <location>
        <begin position="128"/>
        <end position="215"/>
    </location>
</feature>
<feature type="domain" description="PDZ 3" evidence="4">
    <location>
        <begin position="243"/>
        <end position="323"/>
    </location>
</feature>
<feature type="domain" description="PDZ 4" evidence="4">
    <location>
        <begin position="378"/>
        <end position="458"/>
    </location>
</feature>
<feature type="region of interest" description="Disordered" evidence="5">
    <location>
        <begin position="348"/>
        <end position="374"/>
    </location>
</feature>
<feature type="region of interest" description="Disordered" evidence="5">
    <location>
        <begin position="479"/>
        <end position="519"/>
    </location>
</feature>
<feature type="compositionally biased region" description="Basic and acidic residues" evidence="5">
    <location>
        <begin position="482"/>
        <end position="503"/>
    </location>
</feature>
<feature type="compositionally biased region" description="Low complexity" evidence="5">
    <location>
        <begin position="505"/>
        <end position="519"/>
    </location>
</feature>
<feature type="modified residue" description="Phosphoserine" evidence="3">
    <location>
        <position position="108"/>
    </location>
</feature>
<feature type="modified residue" description="Phosphoserine" evidence="17">
    <location>
        <position position="148"/>
    </location>
</feature>
<feature type="modified residue" description="Phosphoserine" evidence="17">
    <location>
        <position position="192"/>
    </location>
</feature>
<feature type="modified residue" description="Phosphoserine" evidence="17">
    <location>
        <position position="250"/>
    </location>
</feature>
<feature type="modified residue" description="Phosphoserine" evidence="17">
    <location>
        <position position="334"/>
    </location>
</feature>
<feature type="modified residue" description="Phosphoserine" evidence="17">
    <location>
        <position position="348"/>
    </location>
</feature>
<feature type="modified residue" description="Phosphothreonine" evidence="17">
    <location>
        <position position="451"/>
    </location>
</feature>
<feature type="modified residue" description="Phosphothreonine" evidence="16">
    <location>
        <position position="488"/>
    </location>
</feature>
<feature type="modified residue" description="Phosphoserine" evidence="16 17">
    <location>
        <position position="489"/>
    </location>
</feature>
<feature type="modified residue" description="Phosphoserine" evidence="16 17">
    <location>
        <position position="492"/>
    </location>
</feature>
<feature type="modified residue" description="Phosphothreonine" evidence="17">
    <location>
        <position position="503"/>
    </location>
</feature>
<feature type="modified residue" description="Phosphoserine" evidence="17">
    <location>
        <position position="508"/>
    </location>
</feature>
<feature type="modified residue" description="Phosphoserine" evidence="17">
    <location>
        <position position="510"/>
    </location>
</feature>
<feature type="modified residue" description="Phosphoserine" evidence="17">
    <location>
        <position position="511"/>
    </location>
</feature>
<feature type="modified residue" description="Phosphoserine" evidence="17">
    <location>
        <position position="512"/>
    </location>
</feature>
<feature type="modified residue" description="Phosphoserine" evidence="16 17">
    <location>
        <position position="514"/>
    </location>
</feature>
<feature type="mutagenesis site" description="Impairs interaction of the first PDZ domain with SCARB1." evidence="12">
    <original>K</original>
    <variation>A</variation>
    <location>
        <position position="14"/>
    </location>
</feature>
<feature type="mutagenesis site" description="Disrupts interaction of the first PDZ domain with SCARB1. Abolishes interaction with SCARB1; when associated with A-253." evidence="12 13">
    <original>Y</original>
    <variation>A</variation>
    <location>
        <position position="20"/>
    </location>
</feature>
<feature type="mutagenesis site" description="Disrupts interaction of the third PDZ domain with SCARB1. Abolishes interaction with SCARB1; when associated with A-20." evidence="13">
    <original>Y</original>
    <variation>A</variation>
    <location>
        <position position="253"/>
    </location>
</feature>
<feature type="sequence conflict" description="In Ref. 1; AAL84634." evidence="15" ref="1">
    <original>L</original>
    <variation>R</variation>
    <location>
        <position position="24"/>
    </location>
</feature>
<feature type="sequence conflict" description="In Ref. 1; AAL84634." evidence="15" ref="1">
    <original>L</original>
    <variation>S</variation>
    <location>
        <position position="135"/>
    </location>
</feature>
<feature type="sequence conflict" description="In Ref. 3; BAB24493/BAC26598/BAC26605/BAB28007/BAB29600." evidence="15" ref="3">
    <original>D</original>
    <variation>N</variation>
    <location>
        <position position="162"/>
    </location>
</feature>
<feature type="sequence conflict" description="In Ref. 1; AAL84634." evidence="15" ref="1">
    <original>D</original>
    <variation>S</variation>
    <location>
        <position position="162"/>
    </location>
</feature>
<feature type="strand" evidence="22">
    <location>
        <begin position="8"/>
        <end position="13"/>
    </location>
</feature>
<feature type="strand" evidence="22">
    <location>
        <begin position="23"/>
        <end position="25"/>
    </location>
</feature>
<feature type="strand" evidence="22">
    <location>
        <begin position="34"/>
        <end position="36"/>
    </location>
</feature>
<feature type="helix" evidence="22">
    <location>
        <begin position="43"/>
        <end position="46"/>
    </location>
</feature>
<feature type="strand" evidence="22">
    <location>
        <begin position="54"/>
        <end position="58"/>
    </location>
</feature>
<feature type="strand" evidence="18">
    <location>
        <begin position="64"/>
        <end position="66"/>
    </location>
</feature>
<feature type="helix" evidence="22">
    <location>
        <begin position="68"/>
        <end position="77"/>
    </location>
</feature>
<feature type="turn" evidence="22">
    <location>
        <begin position="78"/>
        <end position="80"/>
    </location>
</feature>
<feature type="strand" evidence="22">
    <location>
        <begin position="81"/>
        <end position="87"/>
    </location>
</feature>
<feature type="helix" evidence="22">
    <location>
        <begin position="89"/>
        <end position="97"/>
    </location>
</feature>
<feature type="helix" evidence="22">
    <location>
        <begin position="102"/>
        <end position="104"/>
    </location>
</feature>
<feature type="strand" evidence="19">
    <location>
        <begin position="108"/>
        <end position="110"/>
    </location>
</feature>
<feature type="strand" evidence="20">
    <location>
        <begin position="242"/>
        <end position="247"/>
    </location>
</feature>
<feature type="strand" evidence="21">
    <location>
        <begin position="252"/>
        <end position="254"/>
    </location>
</feature>
<feature type="strand" evidence="20">
    <location>
        <begin position="256"/>
        <end position="259"/>
    </location>
</feature>
<feature type="strand" evidence="20">
    <location>
        <begin position="265"/>
        <end position="269"/>
    </location>
</feature>
<feature type="helix" evidence="20">
    <location>
        <begin position="276"/>
        <end position="280"/>
    </location>
</feature>
<feature type="strand" evidence="20">
    <location>
        <begin position="286"/>
        <end position="291"/>
    </location>
</feature>
<feature type="helix" evidence="20">
    <location>
        <begin position="301"/>
        <end position="309"/>
    </location>
</feature>
<feature type="turn" evidence="20">
    <location>
        <begin position="310"/>
        <end position="313"/>
    </location>
</feature>
<feature type="strand" evidence="20">
    <location>
        <begin position="314"/>
        <end position="321"/>
    </location>
</feature>
<feature type="strand" evidence="23">
    <location>
        <begin position="376"/>
        <end position="382"/>
    </location>
</feature>
<feature type="strand" evidence="23">
    <location>
        <begin position="391"/>
        <end position="393"/>
    </location>
</feature>
<feature type="strand" evidence="23">
    <location>
        <begin position="402"/>
        <end position="404"/>
    </location>
</feature>
<feature type="helix" evidence="23">
    <location>
        <begin position="411"/>
        <end position="414"/>
    </location>
</feature>
<feature type="strand" evidence="23">
    <location>
        <begin position="422"/>
        <end position="426"/>
    </location>
</feature>
<feature type="helix" evidence="23">
    <location>
        <begin position="436"/>
        <end position="444"/>
    </location>
</feature>
<feature type="strand" evidence="23">
    <location>
        <begin position="448"/>
        <end position="455"/>
    </location>
</feature>
<protein>
    <recommendedName>
        <fullName>Na(+)/H(+) exchange regulatory cofactor NHE-RF3</fullName>
        <shortName>NHERF-3</shortName>
    </recommendedName>
    <alternativeName>
        <fullName>CFTR-associated protein of 70 kDa</fullName>
    </alternativeName>
    <alternativeName>
        <fullName>Na(+)/H(+) exchanger regulatory factor 3</fullName>
    </alternativeName>
    <alternativeName>
        <fullName>Na/Pi cotransporter C-terminal-associated protein 1</fullName>
        <shortName>NaPi-Cap1</shortName>
    </alternativeName>
    <alternativeName>
        <fullName>PDZ domain-containing protein 1</fullName>
    </alternativeName>
    <alternativeName>
        <fullName>Sodium-hydrogen exchanger regulatory factor 3</fullName>
    </alternativeName>
</protein>
<reference key="1">
    <citation type="journal article" date="2000" name="Cell">
        <title>Accessory protein facilitated CFTR-CFTR interaction, a molecular mechanism to potentiate the chloride channel activity.</title>
        <authorList>
            <person name="Wang S."/>
            <person name="Yue H."/>
            <person name="Derin R.B."/>
            <person name="Guggino W.B."/>
            <person name="Li M."/>
        </authorList>
    </citation>
    <scope>NUCLEOTIDE SEQUENCE [MRNA]</scope>
    <scope>PROTEIN SEQUENCE OF 351-376 AND 467-485</scope>
    <scope>FUNCTION</scope>
    <scope>SUBCELLULAR LOCATION</scope>
    <scope>TISSUE SPECIFICITY</scope>
    <scope>INTERACTION WITH CFTR</scope>
</reference>
<reference key="2">
    <citation type="journal article" date="2003" name="Mol. Cell. Biol.">
        <title>Targeted disruption of the PDZK1 gene by homologous recombination.</title>
        <authorList>
            <person name="Kocher O."/>
            <person name="Pal R."/>
            <person name="Roberts M."/>
            <person name="Cirovic C."/>
            <person name="Gilchrist A."/>
        </authorList>
    </citation>
    <scope>NUCLEOTIDE SEQUENCE [MRNA]</scope>
    <scope>FUNCTION</scope>
    <scope>TISSUE SPECIFICITY</scope>
</reference>
<reference key="3">
    <citation type="journal article" date="2005" name="Science">
        <title>The transcriptional landscape of the mammalian genome.</title>
        <authorList>
            <person name="Carninci P."/>
            <person name="Kasukawa T."/>
            <person name="Katayama S."/>
            <person name="Gough J."/>
            <person name="Frith M.C."/>
            <person name="Maeda N."/>
            <person name="Oyama R."/>
            <person name="Ravasi T."/>
            <person name="Lenhard B."/>
            <person name="Wells C."/>
            <person name="Kodzius R."/>
            <person name="Shimokawa K."/>
            <person name="Bajic V.B."/>
            <person name="Brenner S.E."/>
            <person name="Batalov S."/>
            <person name="Forrest A.R."/>
            <person name="Zavolan M."/>
            <person name="Davis M.J."/>
            <person name="Wilming L.G."/>
            <person name="Aidinis V."/>
            <person name="Allen J.E."/>
            <person name="Ambesi-Impiombato A."/>
            <person name="Apweiler R."/>
            <person name="Aturaliya R.N."/>
            <person name="Bailey T.L."/>
            <person name="Bansal M."/>
            <person name="Baxter L."/>
            <person name="Beisel K.W."/>
            <person name="Bersano T."/>
            <person name="Bono H."/>
            <person name="Chalk A.M."/>
            <person name="Chiu K.P."/>
            <person name="Choudhary V."/>
            <person name="Christoffels A."/>
            <person name="Clutterbuck D.R."/>
            <person name="Crowe M.L."/>
            <person name="Dalla E."/>
            <person name="Dalrymple B.P."/>
            <person name="de Bono B."/>
            <person name="Della Gatta G."/>
            <person name="di Bernardo D."/>
            <person name="Down T."/>
            <person name="Engstrom P."/>
            <person name="Fagiolini M."/>
            <person name="Faulkner G."/>
            <person name="Fletcher C.F."/>
            <person name="Fukushima T."/>
            <person name="Furuno M."/>
            <person name="Futaki S."/>
            <person name="Gariboldi M."/>
            <person name="Georgii-Hemming P."/>
            <person name="Gingeras T.R."/>
            <person name="Gojobori T."/>
            <person name="Green R.E."/>
            <person name="Gustincich S."/>
            <person name="Harbers M."/>
            <person name="Hayashi Y."/>
            <person name="Hensch T.K."/>
            <person name="Hirokawa N."/>
            <person name="Hill D."/>
            <person name="Huminiecki L."/>
            <person name="Iacono M."/>
            <person name="Ikeo K."/>
            <person name="Iwama A."/>
            <person name="Ishikawa T."/>
            <person name="Jakt M."/>
            <person name="Kanapin A."/>
            <person name="Katoh M."/>
            <person name="Kawasawa Y."/>
            <person name="Kelso J."/>
            <person name="Kitamura H."/>
            <person name="Kitano H."/>
            <person name="Kollias G."/>
            <person name="Krishnan S.P."/>
            <person name="Kruger A."/>
            <person name="Kummerfeld S.K."/>
            <person name="Kurochkin I.V."/>
            <person name="Lareau L.F."/>
            <person name="Lazarevic D."/>
            <person name="Lipovich L."/>
            <person name="Liu J."/>
            <person name="Liuni S."/>
            <person name="McWilliam S."/>
            <person name="Madan Babu M."/>
            <person name="Madera M."/>
            <person name="Marchionni L."/>
            <person name="Matsuda H."/>
            <person name="Matsuzawa S."/>
            <person name="Miki H."/>
            <person name="Mignone F."/>
            <person name="Miyake S."/>
            <person name="Morris K."/>
            <person name="Mottagui-Tabar S."/>
            <person name="Mulder N."/>
            <person name="Nakano N."/>
            <person name="Nakauchi H."/>
            <person name="Ng P."/>
            <person name="Nilsson R."/>
            <person name="Nishiguchi S."/>
            <person name="Nishikawa S."/>
            <person name="Nori F."/>
            <person name="Ohara O."/>
            <person name="Okazaki Y."/>
            <person name="Orlando V."/>
            <person name="Pang K.C."/>
            <person name="Pavan W.J."/>
            <person name="Pavesi G."/>
            <person name="Pesole G."/>
            <person name="Petrovsky N."/>
            <person name="Piazza S."/>
            <person name="Reed J."/>
            <person name="Reid J.F."/>
            <person name="Ring B.Z."/>
            <person name="Ringwald M."/>
            <person name="Rost B."/>
            <person name="Ruan Y."/>
            <person name="Salzberg S.L."/>
            <person name="Sandelin A."/>
            <person name="Schneider C."/>
            <person name="Schoenbach C."/>
            <person name="Sekiguchi K."/>
            <person name="Semple C.A."/>
            <person name="Seno S."/>
            <person name="Sessa L."/>
            <person name="Sheng Y."/>
            <person name="Shibata Y."/>
            <person name="Shimada H."/>
            <person name="Shimada K."/>
            <person name="Silva D."/>
            <person name="Sinclair B."/>
            <person name="Sperling S."/>
            <person name="Stupka E."/>
            <person name="Sugiura K."/>
            <person name="Sultana R."/>
            <person name="Takenaka Y."/>
            <person name="Taki K."/>
            <person name="Tammoja K."/>
            <person name="Tan S.L."/>
            <person name="Tang S."/>
            <person name="Taylor M.S."/>
            <person name="Tegner J."/>
            <person name="Teichmann S.A."/>
            <person name="Ueda H.R."/>
            <person name="van Nimwegen E."/>
            <person name="Verardo R."/>
            <person name="Wei C.L."/>
            <person name="Yagi K."/>
            <person name="Yamanishi H."/>
            <person name="Zabarovsky E."/>
            <person name="Zhu S."/>
            <person name="Zimmer A."/>
            <person name="Hide W."/>
            <person name="Bult C."/>
            <person name="Grimmond S.M."/>
            <person name="Teasdale R.D."/>
            <person name="Liu E.T."/>
            <person name="Brusic V."/>
            <person name="Quackenbush J."/>
            <person name="Wahlestedt C."/>
            <person name="Mattick J.S."/>
            <person name="Hume D.A."/>
            <person name="Kai C."/>
            <person name="Sasaki D."/>
            <person name="Tomaru Y."/>
            <person name="Fukuda S."/>
            <person name="Kanamori-Katayama M."/>
            <person name="Suzuki M."/>
            <person name="Aoki J."/>
            <person name="Arakawa T."/>
            <person name="Iida J."/>
            <person name="Imamura K."/>
            <person name="Itoh M."/>
            <person name="Kato T."/>
            <person name="Kawaji H."/>
            <person name="Kawagashira N."/>
            <person name="Kawashima T."/>
            <person name="Kojima M."/>
            <person name="Kondo S."/>
            <person name="Konno H."/>
            <person name="Nakano K."/>
            <person name="Ninomiya N."/>
            <person name="Nishio T."/>
            <person name="Okada M."/>
            <person name="Plessy C."/>
            <person name="Shibata K."/>
            <person name="Shiraki T."/>
            <person name="Suzuki S."/>
            <person name="Tagami M."/>
            <person name="Waki K."/>
            <person name="Watahiki A."/>
            <person name="Okamura-Oho Y."/>
            <person name="Suzuki H."/>
            <person name="Kawai J."/>
            <person name="Hayashizaki Y."/>
        </authorList>
    </citation>
    <scope>NUCLEOTIDE SEQUENCE [LARGE SCALE MRNA]</scope>
    <source>
        <strain>C57BL/6J</strain>
        <tissue>Testis</tissue>
    </source>
</reference>
<reference key="4">
    <citation type="journal article" date="2004" name="Genome Res.">
        <title>The status, quality, and expansion of the NIH full-length cDNA project: the Mammalian Gene Collection (MGC).</title>
        <authorList>
            <consortium name="The MGC Project Team"/>
        </authorList>
    </citation>
    <scope>NUCLEOTIDE SEQUENCE [LARGE SCALE MRNA]</scope>
    <source>
        <strain>FVB/N</strain>
        <tissue>Kidney</tissue>
    </source>
</reference>
<reference key="5">
    <citation type="journal article" date="2001" name="J. Biol. Chem.">
        <title>Interaction of the type IIa Na/Pi-cotransporter with PDZ proteins.</title>
        <authorList>
            <person name="Gisler S.M."/>
            <person name="Stagljar I."/>
            <person name="Traebert M."/>
            <person name="Bacic D."/>
            <person name="Biber J."/>
            <person name="Murer H."/>
        </authorList>
    </citation>
    <scope>INTERACTION WITH SLC17A1</scope>
</reference>
<reference key="6">
    <citation type="journal article" date="2003" name="Kidney Int.">
        <title>PDZK1: I. a major scaffolder in brush borders of proximal tubular cells.</title>
        <authorList>
            <person name="Gisler S.M."/>
            <person name="Pribanic S."/>
            <person name="Bacic D."/>
            <person name="Forrer P."/>
            <person name="Gantenbein A."/>
            <person name="Sabourin L.A."/>
            <person name="Tsuji A."/>
            <person name="Zhao Z.-S."/>
            <person name="Manser E."/>
            <person name="Biber J."/>
            <person name="Murer H."/>
        </authorList>
    </citation>
    <scope>FUNCTION</scope>
    <scope>INTERACTION WITH AKAP2; SLC22A12; SLC22A4; SLC26A6; NHERF1; NHERF2 AND PDZK1IP1</scope>
</reference>
<reference key="7">
    <citation type="journal article" date="2005" name="Mol. Pharmacol.">
        <title>PDZK1 directly regulates the function of organic cation/carnitine transporter OCTN2.</title>
        <authorList>
            <person name="Kato Y."/>
            <person name="Sai Y."/>
            <person name="Yoshida K."/>
            <person name="Watanabe C."/>
            <person name="Hirata T."/>
            <person name="Tsuji A."/>
        </authorList>
    </citation>
    <scope>FUNCTION</scope>
    <scope>INTERACTION WITH SLC22A5</scope>
</reference>
<reference key="8">
    <citation type="journal article" date="2005" name="Proc. Natl. Acad. Sci. U.S.A.">
        <title>Role of PDZK1 in membrane expression of renal brush border ion exchangers.</title>
        <authorList>
            <person name="Thomson R.B."/>
            <person name="Wang T."/>
            <person name="Thomson B.R."/>
            <person name="Tarrats L."/>
            <person name="Girardi A."/>
            <person name="Mentone S."/>
            <person name="Soleimani M."/>
            <person name="Kocher O."/>
            <person name="Aronson P.S."/>
        </authorList>
    </citation>
    <scope>FUNCTION</scope>
    <scope>SUBCELLULAR LOCATION</scope>
</reference>
<reference key="9">
    <citation type="journal article" date="2007" name="Proc. Natl. Acad. Sci. U.S.A.">
        <title>Large-scale phosphorylation analysis of mouse liver.</title>
        <authorList>
            <person name="Villen J."/>
            <person name="Beausoleil S.A."/>
            <person name="Gerber S.A."/>
            <person name="Gygi S.P."/>
        </authorList>
    </citation>
    <scope>PHOSPHORYLATION [LARGE SCALE ANALYSIS] AT THR-488; SER-489; SER-492 AND SER-514</scope>
    <scope>IDENTIFICATION BY MASS SPECTROMETRY [LARGE SCALE ANALYSIS]</scope>
    <source>
        <tissue>Liver</tissue>
    </source>
</reference>
<reference key="10">
    <citation type="journal article" date="2010" name="Cell">
        <title>A tissue-specific atlas of mouse protein phosphorylation and expression.</title>
        <authorList>
            <person name="Huttlin E.L."/>
            <person name="Jedrychowski M.P."/>
            <person name="Elias J.E."/>
            <person name="Goswami T."/>
            <person name="Rad R."/>
            <person name="Beausoleil S.A."/>
            <person name="Villen J."/>
            <person name="Haas W."/>
            <person name="Sowa M.E."/>
            <person name="Gygi S.P."/>
        </authorList>
    </citation>
    <scope>PHOSPHORYLATION [LARGE SCALE ANALYSIS] AT SER-148; SER-192; SER-250; SER-334; SER-348; THR-451; SER-489; SER-492; THR-503; SER-508; SER-510; SER-511; SER-512 AND SER-514</scope>
    <scope>IDENTIFICATION BY MASS SPECTROMETRY [LARGE SCALE ANALYSIS]</scope>
    <source>
        <tissue>Kidney</tissue>
        <tissue>Liver</tissue>
    </source>
</reference>
<reference key="11">
    <citation type="submission" date="2006-12" db="PDB data bank">
        <title>Solution structure of the third PDZ domain of PDZ domain containing protein 1.</title>
        <authorList>
            <consortium name="RIKEN structural genomics initiative (RSGI)"/>
        </authorList>
    </citation>
    <scope>STRUCTURE BY NMR OF 242-331</scope>
</reference>
<reference key="12">
    <citation type="journal article" date="2010" name="J. Biol. Chem.">
        <title>In vitro and in vivo analysis of the binding of the C terminus of the HDL receptor scavenger receptor class B, type I (SR-BI), to the PDZ1 domain of its adaptor protein PDZK1.</title>
        <authorList>
            <person name="Kocher O."/>
            <person name="Birrane G."/>
            <person name="Tsukamoto K."/>
            <person name="Fenske S."/>
            <person name="Yesilaltay A."/>
            <person name="Pal R."/>
            <person name="Daniels K."/>
            <person name="Ladias J.A."/>
            <person name="Krieger M."/>
        </authorList>
    </citation>
    <scope>X-RAY CRYSTALLOGRAPHY (1.80 ANGSTROMS) OF 7-106</scope>
    <scope>INTERACTION WITH SCARB1</scope>
    <scope>FUNCTION</scope>
    <scope>MUTAGENESIS OF LYS-14 AND TYR-20</scope>
</reference>
<reference key="13">
    <citation type="journal article" date="2011" name="J. Biol. Chem.">
        <title>Identification of the PDZ3 domain of the adaptor protein PDZK1 as a second, physiologically functional binding site for the C terminus of the high density lipoprotein receptor scavenger receptor class B type I.</title>
        <authorList>
            <person name="Kocher O."/>
            <person name="Birrane G."/>
            <person name="Yesilaltay A."/>
            <person name="Shechter S."/>
            <person name="Pal R."/>
            <person name="Daniels K."/>
            <person name="Krieger M."/>
        </authorList>
    </citation>
    <scope>X-RAY CRYSTALLOGRAPHY (1.30 ANGSTROMS) OF 238-323 IN COMPLEX WITH SCARB1</scope>
    <scope>INTERACTION WITH SCARB1</scope>
    <scope>MUTAGENESIS OF TYR-20 AND TYR-253</scope>
    <scope>FUNCTION</scope>
</reference>
<reference key="14">
    <citation type="journal article" date="2013" name="PLoS ONE">
        <title>Molecular analysis of the prostacyclin receptor's interaction with the PDZ1 domain of its adaptor protein PDZK1.</title>
        <authorList>
            <person name="Birrane G."/>
            <person name="Mulvaney E.P."/>
            <person name="Pal R."/>
            <person name="Kinsella B.T."/>
            <person name="Kocher O."/>
        </authorList>
    </citation>
    <scope>X-RAY CRYSTALLOGRAPHY (1.7 ANGSTROMS) OF 7-106 IN COMPLEX WITH PTGIR</scope>
    <scope>INTERACTION WITH PTGIR</scope>
</reference>
<name>NHRF3_MOUSE</name>
<accession>Q9JIL4</accession>
<accession>Q8CDP5</accession>
<accession>Q8R4G2</accession>
<accession>Q9CQ72</accession>